<sequence>MSQNDLNKEKALVVFSGGQDSTTCLFYAKKHFKEVELVTFNYGQRHDKEIEVAKKIAKEQNLKHHILDMSLLSQLTPNALTQHELSIEDNDDGIPNTFVPARNLLFLSFAGALAYQIHAKHIITGVCETDFSGYPDCRDSFIKSMNVTLSLSMDKDFVIHTPLMWLDKAQTWALSDKLGVLDYIRHNTLTCYNGIIGDGCGECPACHLRARGLKHYLEHKGEE</sequence>
<accession>Q5HR20</accession>
<evidence type="ECO:0000255" key="1">
    <source>
        <dbReference type="HAMAP-Rule" id="MF_01633"/>
    </source>
</evidence>
<dbReference type="EC" id="6.3.4.20" evidence="1"/>
<dbReference type="EMBL" id="CP000029">
    <property type="protein sequence ID" value="AAW53740.1"/>
    <property type="molecule type" value="Genomic_DNA"/>
</dbReference>
<dbReference type="RefSeq" id="WP_001830328.1">
    <property type="nucleotide sequence ID" value="NC_002976.3"/>
</dbReference>
<dbReference type="SMR" id="Q5HR20"/>
<dbReference type="STRING" id="176279.SERP0373"/>
<dbReference type="KEGG" id="ser:SERP0373"/>
<dbReference type="eggNOG" id="COG0603">
    <property type="taxonomic scope" value="Bacteria"/>
</dbReference>
<dbReference type="HOGENOM" id="CLU_081854_0_0_9"/>
<dbReference type="UniPathway" id="UPA00391"/>
<dbReference type="Proteomes" id="UP000000531">
    <property type="component" value="Chromosome"/>
</dbReference>
<dbReference type="GO" id="GO:0005524">
    <property type="term" value="F:ATP binding"/>
    <property type="evidence" value="ECO:0007669"/>
    <property type="project" value="UniProtKB-UniRule"/>
</dbReference>
<dbReference type="GO" id="GO:0016879">
    <property type="term" value="F:ligase activity, forming carbon-nitrogen bonds"/>
    <property type="evidence" value="ECO:0007669"/>
    <property type="project" value="UniProtKB-UniRule"/>
</dbReference>
<dbReference type="GO" id="GO:0008270">
    <property type="term" value="F:zinc ion binding"/>
    <property type="evidence" value="ECO:0007669"/>
    <property type="project" value="UniProtKB-UniRule"/>
</dbReference>
<dbReference type="GO" id="GO:0008616">
    <property type="term" value="P:queuosine biosynthetic process"/>
    <property type="evidence" value="ECO:0007669"/>
    <property type="project" value="UniProtKB-UniRule"/>
</dbReference>
<dbReference type="CDD" id="cd01995">
    <property type="entry name" value="QueC-like"/>
    <property type="match status" value="1"/>
</dbReference>
<dbReference type="FunFam" id="3.40.50.620:FF:000017">
    <property type="entry name" value="7-cyano-7-deazaguanine synthase"/>
    <property type="match status" value="1"/>
</dbReference>
<dbReference type="Gene3D" id="3.40.50.620">
    <property type="entry name" value="HUPs"/>
    <property type="match status" value="1"/>
</dbReference>
<dbReference type="HAMAP" id="MF_01633">
    <property type="entry name" value="QueC"/>
    <property type="match status" value="1"/>
</dbReference>
<dbReference type="InterPro" id="IPR018317">
    <property type="entry name" value="QueC"/>
</dbReference>
<dbReference type="InterPro" id="IPR014729">
    <property type="entry name" value="Rossmann-like_a/b/a_fold"/>
</dbReference>
<dbReference type="NCBIfam" id="TIGR00364">
    <property type="entry name" value="7-cyano-7-deazaguanine synthase QueC"/>
    <property type="match status" value="1"/>
</dbReference>
<dbReference type="PANTHER" id="PTHR42914">
    <property type="entry name" value="7-CYANO-7-DEAZAGUANINE SYNTHASE"/>
    <property type="match status" value="1"/>
</dbReference>
<dbReference type="PANTHER" id="PTHR42914:SF1">
    <property type="entry name" value="7-CYANO-7-DEAZAGUANINE SYNTHASE"/>
    <property type="match status" value="1"/>
</dbReference>
<dbReference type="Pfam" id="PF06508">
    <property type="entry name" value="QueC"/>
    <property type="match status" value="1"/>
</dbReference>
<dbReference type="PIRSF" id="PIRSF006293">
    <property type="entry name" value="ExsB"/>
    <property type="match status" value="1"/>
</dbReference>
<dbReference type="SUPFAM" id="SSF52402">
    <property type="entry name" value="Adenine nucleotide alpha hydrolases-like"/>
    <property type="match status" value="1"/>
</dbReference>
<comment type="function">
    <text evidence="1">Catalyzes the ATP-dependent conversion of 7-carboxy-7-deazaguanine (CDG) to 7-cyano-7-deazaguanine (preQ(0)).</text>
</comment>
<comment type="catalytic activity">
    <reaction evidence="1">
        <text>7-carboxy-7-deazaguanine + NH4(+) + ATP = 7-cyano-7-deazaguanine + ADP + phosphate + H2O + H(+)</text>
        <dbReference type="Rhea" id="RHEA:27982"/>
        <dbReference type="ChEBI" id="CHEBI:15377"/>
        <dbReference type="ChEBI" id="CHEBI:15378"/>
        <dbReference type="ChEBI" id="CHEBI:28938"/>
        <dbReference type="ChEBI" id="CHEBI:30616"/>
        <dbReference type="ChEBI" id="CHEBI:43474"/>
        <dbReference type="ChEBI" id="CHEBI:45075"/>
        <dbReference type="ChEBI" id="CHEBI:61036"/>
        <dbReference type="ChEBI" id="CHEBI:456216"/>
        <dbReference type="EC" id="6.3.4.20"/>
    </reaction>
</comment>
<comment type="cofactor">
    <cofactor evidence="1">
        <name>Zn(2+)</name>
        <dbReference type="ChEBI" id="CHEBI:29105"/>
    </cofactor>
    <text evidence="1">Binds 1 zinc ion per subunit.</text>
</comment>
<comment type="pathway">
    <text evidence="1">Purine metabolism; 7-cyano-7-deazaguanine biosynthesis.</text>
</comment>
<comment type="subunit">
    <text evidence="1">Homodimer.</text>
</comment>
<comment type="similarity">
    <text evidence="1">Belongs to the QueC family.</text>
</comment>
<keyword id="KW-0067">ATP-binding</keyword>
<keyword id="KW-0436">Ligase</keyword>
<keyword id="KW-0479">Metal-binding</keyword>
<keyword id="KW-0547">Nucleotide-binding</keyword>
<keyword id="KW-0671">Queuosine biosynthesis</keyword>
<keyword id="KW-1185">Reference proteome</keyword>
<keyword id="KW-0862">Zinc</keyword>
<feature type="chain" id="PRO_0000246938" description="7-cyano-7-deazaguanine synthase">
    <location>
        <begin position="1"/>
        <end position="223"/>
    </location>
</feature>
<feature type="binding site" evidence="1">
    <location>
        <begin position="15"/>
        <end position="25"/>
    </location>
    <ligand>
        <name>ATP</name>
        <dbReference type="ChEBI" id="CHEBI:30616"/>
    </ligand>
</feature>
<feature type="binding site" evidence="1">
    <location>
        <position position="191"/>
    </location>
    <ligand>
        <name>Zn(2+)</name>
        <dbReference type="ChEBI" id="CHEBI:29105"/>
    </ligand>
</feature>
<feature type="binding site" evidence="1">
    <location>
        <position position="200"/>
    </location>
    <ligand>
        <name>Zn(2+)</name>
        <dbReference type="ChEBI" id="CHEBI:29105"/>
    </ligand>
</feature>
<feature type="binding site" evidence="1">
    <location>
        <position position="203"/>
    </location>
    <ligand>
        <name>Zn(2+)</name>
        <dbReference type="ChEBI" id="CHEBI:29105"/>
    </ligand>
</feature>
<feature type="binding site" evidence="1">
    <location>
        <position position="206"/>
    </location>
    <ligand>
        <name>Zn(2+)</name>
        <dbReference type="ChEBI" id="CHEBI:29105"/>
    </ligand>
</feature>
<reference key="1">
    <citation type="journal article" date="2005" name="J. Bacteriol.">
        <title>Insights on evolution of virulence and resistance from the complete genome analysis of an early methicillin-resistant Staphylococcus aureus strain and a biofilm-producing methicillin-resistant Staphylococcus epidermidis strain.</title>
        <authorList>
            <person name="Gill S.R."/>
            <person name="Fouts D.E."/>
            <person name="Archer G.L."/>
            <person name="Mongodin E.F."/>
            <person name="DeBoy R.T."/>
            <person name="Ravel J."/>
            <person name="Paulsen I.T."/>
            <person name="Kolonay J.F."/>
            <person name="Brinkac L.M."/>
            <person name="Beanan M.J."/>
            <person name="Dodson R.J."/>
            <person name="Daugherty S.C."/>
            <person name="Madupu R."/>
            <person name="Angiuoli S.V."/>
            <person name="Durkin A.S."/>
            <person name="Haft D.H."/>
            <person name="Vamathevan J.J."/>
            <person name="Khouri H."/>
            <person name="Utterback T.R."/>
            <person name="Lee C."/>
            <person name="Dimitrov G."/>
            <person name="Jiang L."/>
            <person name="Qin H."/>
            <person name="Weidman J."/>
            <person name="Tran K."/>
            <person name="Kang K.H."/>
            <person name="Hance I.R."/>
            <person name="Nelson K.E."/>
            <person name="Fraser C.M."/>
        </authorList>
    </citation>
    <scope>NUCLEOTIDE SEQUENCE [LARGE SCALE GENOMIC DNA]</scope>
    <source>
        <strain>ATCC 35984 / DSM 28319 / BCRC 17069 / CCUG 31568 / BM 3577 / RP62A</strain>
    </source>
</reference>
<name>QUEC_STAEQ</name>
<proteinExistence type="inferred from homology"/>
<gene>
    <name evidence="1" type="primary">queC</name>
    <name type="ordered locus">SERP0373</name>
</gene>
<organism>
    <name type="scientific">Staphylococcus epidermidis (strain ATCC 35984 / DSM 28319 / BCRC 17069 / CCUG 31568 / BM 3577 / RP62A)</name>
    <dbReference type="NCBI Taxonomy" id="176279"/>
    <lineage>
        <taxon>Bacteria</taxon>
        <taxon>Bacillati</taxon>
        <taxon>Bacillota</taxon>
        <taxon>Bacilli</taxon>
        <taxon>Bacillales</taxon>
        <taxon>Staphylococcaceae</taxon>
        <taxon>Staphylococcus</taxon>
    </lineage>
</organism>
<protein>
    <recommendedName>
        <fullName evidence="1">7-cyano-7-deazaguanine synthase</fullName>
        <ecNumber evidence="1">6.3.4.20</ecNumber>
    </recommendedName>
    <alternativeName>
        <fullName evidence="1">7-cyano-7-carbaguanine synthase</fullName>
    </alternativeName>
    <alternativeName>
        <fullName evidence="1">PreQ(0) synthase</fullName>
    </alternativeName>
    <alternativeName>
        <fullName evidence="1">Queuosine biosynthesis protein QueC</fullName>
    </alternativeName>
</protein>